<comment type="function">
    <text>Its overexpression in smooth muscle cell lines increases their migratory ability and inhibits collagen type I expression. May act as a negative regulator of collagen matrix deposition.</text>
</comment>
<comment type="subcellular location">
    <subcellularLocation>
        <location evidence="3">Secreted</location>
        <location evidence="3">Extracellular space</location>
        <location evidence="3">Extracellular matrix</location>
    </subcellularLocation>
</comment>
<comment type="tissue specificity">
    <text evidence="3">Expressed after injury in the carotid arteries (at protein level). Expressed in brain, lung, and after injury in fibroblasts of the adventitia and the neointima of the arteries.</text>
</comment>
<comment type="induction">
    <text evidence="3">Strongly induced in carotid arteries after injury (balloon catheter injury model). By various growth factor (BMP4, TGFB1) in NIH 3T3 cell line.</text>
</comment>
<comment type="PTM">
    <text evidence="3">N-glycosylated.</text>
</comment>
<reference key="1">
    <citation type="journal article" date="2005" name="Circ. Res.">
        <title>Collagen triple helix repeat containing 1, a novel secreted protein in injured and diseased arteries, inhibits collagen expression and promotes cell migration.</title>
        <authorList>
            <person name="Pyagay P."/>
            <person name="Heroult M."/>
            <person name="Wang Q."/>
            <person name="Lehnert W."/>
            <person name="Belden J."/>
            <person name="Liaw L."/>
            <person name="Friesel R.E."/>
            <person name="Lindner V."/>
        </authorList>
    </citation>
    <scope>NUCLEOTIDE SEQUENCE [MRNA]</scope>
    <scope>POSSIBLE FUNCTION</scope>
    <scope>GLYCOSYLATION</scope>
    <scope>INDUCTION</scope>
    <scope>SUBCELLULAR LOCATION</scope>
    <scope>TISSUE SPECIFICITY</scope>
    <source>
        <strain>Sprague-Dawley</strain>
        <tissue>Carotid artery</tissue>
    </source>
</reference>
<evidence type="ECO:0000255" key="1"/>
<evidence type="ECO:0000256" key="2">
    <source>
        <dbReference type="SAM" id="MobiDB-lite"/>
    </source>
</evidence>
<evidence type="ECO:0000269" key="3">
    <source>
    </source>
</evidence>
<gene>
    <name type="primary">Cthrc1</name>
</gene>
<sequence>MHPQGRAASPQLLLGLFLVLLLLLQLSAPSSASENPKVKQKALIRQREVVDLYNGMCLQGPAGVPGRDGSPGANGIPGTPGIPGRDGFKGEKGECLRESFEESWTPNYKQCSWSSLNYGIDLGKIAECTFTKMRSNSALRVLFSGSLRLKCRNACCQRWYFTFNGAECSGPLPIEAIIYLDQGSPELNSTINIHRTSSVEGLCEGIGAGLVDVAIWVGTCSDYPKGDASTGWNSVSRIIIEELPK</sequence>
<dbReference type="EMBL" id="AY136824">
    <property type="protein sequence ID" value="AAN15748.1"/>
    <property type="molecule type" value="mRNA"/>
</dbReference>
<dbReference type="RefSeq" id="NP_758836.1">
    <property type="nucleotide sequence ID" value="NM_172333.2"/>
</dbReference>
<dbReference type="FunCoup" id="Q8CG08">
    <property type="interactions" value="412"/>
</dbReference>
<dbReference type="STRING" id="10116.ENSRNOP00000006142"/>
<dbReference type="GlyCosmos" id="Q8CG08">
    <property type="glycosylation" value="1 site, No reported glycans"/>
</dbReference>
<dbReference type="GlyGen" id="Q8CG08">
    <property type="glycosylation" value="2 sites"/>
</dbReference>
<dbReference type="PhosphoSitePlus" id="Q8CG08"/>
<dbReference type="PaxDb" id="10116-ENSRNOP00000006142"/>
<dbReference type="GeneID" id="282836"/>
<dbReference type="KEGG" id="rno:282836"/>
<dbReference type="UCSC" id="RGD:628801">
    <property type="organism name" value="rat"/>
</dbReference>
<dbReference type="AGR" id="RGD:628801"/>
<dbReference type="CTD" id="115908"/>
<dbReference type="RGD" id="628801">
    <property type="gene designation" value="Cthrc1"/>
</dbReference>
<dbReference type="VEuPathDB" id="HostDB:ENSRNOG00000004578"/>
<dbReference type="eggNOG" id="ENOG502QSJD">
    <property type="taxonomic scope" value="Eukaryota"/>
</dbReference>
<dbReference type="HOGENOM" id="CLU_099891_0_0_1"/>
<dbReference type="InParanoid" id="Q8CG08"/>
<dbReference type="OrthoDB" id="18950at9989"/>
<dbReference type="PhylomeDB" id="Q8CG08"/>
<dbReference type="TreeFam" id="TF328705"/>
<dbReference type="PRO" id="PR:Q8CG08"/>
<dbReference type="Proteomes" id="UP000002494">
    <property type="component" value="Chromosome 7"/>
</dbReference>
<dbReference type="Bgee" id="ENSRNOG00000004578">
    <property type="expression patterns" value="Expressed in quadriceps femoris and 16 other cell types or tissues"/>
</dbReference>
<dbReference type="GO" id="GO:0005581">
    <property type="term" value="C:collagen trimer"/>
    <property type="evidence" value="ECO:0007669"/>
    <property type="project" value="UniProtKB-KW"/>
</dbReference>
<dbReference type="GO" id="GO:0005737">
    <property type="term" value="C:cytoplasm"/>
    <property type="evidence" value="ECO:0000318"/>
    <property type="project" value="GO_Central"/>
</dbReference>
<dbReference type="GO" id="GO:0031012">
    <property type="term" value="C:extracellular matrix"/>
    <property type="evidence" value="ECO:0000314"/>
    <property type="project" value="MGI"/>
</dbReference>
<dbReference type="GO" id="GO:0005615">
    <property type="term" value="C:extracellular space"/>
    <property type="evidence" value="ECO:0000266"/>
    <property type="project" value="RGD"/>
</dbReference>
<dbReference type="GO" id="GO:0043005">
    <property type="term" value="C:neuron projection"/>
    <property type="evidence" value="ECO:0000318"/>
    <property type="project" value="GO_Central"/>
</dbReference>
<dbReference type="GO" id="GO:0016528">
    <property type="term" value="C:sarcoplasm"/>
    <property type="evidence" value="ECO:0000266"/>
    <property type="project" value="RGD"/>
</dbReference>
<dbReference type="GO" id="GO:0005109">
    <property type="term" value="F:frizzled binding"/>
    <property type="evidence" value="ECO:0000266"/>
    <property type="project" value="RGD"/>
</dbReference>
<dbReference type="GO" id="GO:0004666">
    <property type="term" value="F:prostaglandin-endoperoxide synthase activity"/>
    <property type="evidence" value="ECO:0000318"/>
    <property type="project" value="GO_Central"/>
</dbReference>
<dbReference type="GO" id="GO:0017147">
    <property type="term" value="F:Wnt-protein binding"/>
    <property type="evidence" value="ECO:0000266"/>
    <property type="project" value="RGD"/>
</dbReference>
<dbReference type="GO" id="GO:0016477">
    <property type="term" value="P:cell migration"/>
    <property type="evidence" value="ECO:0000315"/>
    <property type="project" value="MGI"/>
</dbReference>
<dbReference type="GO" id="GO:0090103">
    <property type="term" value="P:cochlea morphogenesis"/>
    <property type="evidence" value="ECO:0000266"/>
    <property type="project" value="RGD"/>
</dbReference>
<dbReference type="GO" id="GO:0019371">
    <property type="term" value="P:cyclooxygenase pathway"/>
    <property type="evidence" value="ECO:0000318"/>
    <property type="project" value="GO_Central"/>
</dbReference>
<dbReference type="GO" id="GO:0090177">
    <property type="term" value="P:establishment of planar polarity involved in neural tube closure"/>
    <property type="evidence" value="ECO:0000266"/>
    <property type="project" value="RGD"/>
</dbReference>
<dbReference type="GO" id="GO:0060122">
    <property type="term" value="P:inner ear receptor cell stereocilium organization"/>
    <property type="evidence" value="ECO:0000266"/>
    <property type="project" value="RGD"/>
</dbReference>
<dbReference type="GO" id="GO:0090090">
    <property type="term" value="P:negative regulation of canonical Wnt signaling pathway"/>
    <property type="evidence" value="ECO:0000266"/>
    <property type="project" value="RGD"/>
</dbReference>
<dbReference type="GO" id="GO:0043932">
    <property type="term" value="P:ossification involved in bone remodeling"/>
    <property type="evidence" value="ECO:0000266"/>
    <property type="project" value="RGD"/>
</dbReference>
<dbReference type="GO" id="GO:0001649">
    <property type="term" value="P:osteoblast differentiation"/>
    <property type="evidence" value="ECO:0000266"/>
    <property type="project" value="RGD"/>
</dbReference>
<dbReference type="GO" id="GO:0033687">
    <property type="term" value="P:osteoblast proliferation"/>
    <property type="evidence" value="ECO:0000266"/>
    <property type="project" value="RGD"/>
</dbReference>
<dbReference type="GO" id="GO:0045669">
    <property type="term" value="P:positive regulation of osteoblast differentiation"/>
    <property type="evidence" value="ECO:0000266"/>
    <property type="project" value="RGD"/>
</dbReference>
<dbReference type="GO" id="GO:0033690">
    <property type="term" value="P:positive regulation of osteoblast proliferation"/>
    <property type="evidence" value="ECO:0000266"/>
    <property type="project" value="RGD"/>
</dbReference>
<dbReference type="GO" id="GO:0060071">
    <property type="term" value="P:Wnt signaling pathway, planar cell polarity pathway"/>
    <property type="evidence" value="ECO:0000266"/>
    <property type="project" value="RGD"/>
</dbReference>
<protein>
    <recommendedName>
        <fullName>Collagen triple helix repeat-containing protein 1</fullName>
    </recommendedName>
</protein>
<organism>
    <name type="scientific">Rattus norvegicus</name>
    <name type="common">Rat</name>
    <dbReference type="NCBI Taxonomy" id="10116"/>
    <lineage>
        <taxon>Eukaryota</taxon>
        <taxon>Metazoa</taxon>
        <taxon>Chordata</taxon>
        <taxon>Craniata</taxon>
        <taxon>Vertebrata</taxon>
        <taxon>Euteleostomi</taxon>
        <taxon>Mammalia</taxon>
        <taxon>Eutheria</taxon>
        <taxon>Euarchontoglires</taxon>
        <taxon>Glires</taxon>
        <taxon>Rodentia</taxon>
        <taxon>Myomorpha</taxon>
        <taxon>Muroidea</taxon>
        <taxon>Muridae</taxon>
        <taxon>Murinae</taxon>
        <taxon>Rattus</taxon>
    </lineage>
</organism>
<name>CTHR1_RAT</name>
<keyword id="KW-0176">Collagen</keyword>
<keyword id="KW-0272">Extracellular matrix</keyword>
<keyword id="KW-0325">Glycoprotein</keyword>
<keyword id="KW-1185">Reference proteome</keyword>
<keyword id="KW-0964">Secreted</keyword>
<keyword id="KW-0732">Signal</keyword>
<proteinExistence type="evidence at protein level"/>
<feature type="signal peptide" evidence="1">
    <location>
        <begin position="1"/>
        <end position="32"/>
    </location>
</feature>
<feature type="chain" id="PRO_0000021040" description="Collagen triple helix repeat-containing protein 1">
    <location>
        <begin position="33"/>
        <end position="245"/>
    </location>
</feature>
<feature type="domain" description="Collagen-like">
    <location>
        <begin position="59"/>
        <end position="92"/>
    </location>
</feature>
<feature type="region of interest" description="Disordered" evidence="2">
    <location>
        <begin position="64"/>
        <end position="87"/>
    </location>
</feature>
<feature type="glycosylation site" description="N-linked (GlcNAc...) asparagine" evidence="1">
    <location>
        <position position="188"/>
    </location>
</feature>
<accession>Q8CG08</accession>